<protein>
    <recommendedName>
        <fullName evidence="1">Acyl carrier protein</fullName>
        <shortName evidence="1">ACP</shortName>
    </recommendedName>
</protein>
<organism>
    <name type="scientific">Clostridium perfringens (strain ATCC 13124 / DSM 756 / JCM 1290 / NCIMB 6125 / NCTC 8237 / Type A)</name>
    <dbReference type="NCBI Taxonomy" id="195103"/>
    <lineage>
        <taxon>Bacteria</taxon>
        <taxon>Bacillati</taxon>
        <taxon>Bacillota</taxon>
        <taxon>Clostridia</taxon>
        <taxon>Eubacteriales</taxon>
        <taxon>Clostridiaceae</taxon>
        <taxon>Clostridium</taxon>
    </lineage>
</organism>
<reference key="1">
    <citation type="journal article" date="2006" name="Genome Res.">
        <title>Skewed genomic variability in strains of the toxigenic bacterial pathogen, Clostridium perfringens.</title>
        <authorList>
            <person name="Myers G.S.A."/>
            <person name="Rasko D.A."/>
            <person name="Cheung J.K."/>
            <person name="Ravel J."/>
            <person name="Seshadri R."/>
            <person name="DeBoy R.T."/>
            <person name="Ren Q."/>
            <person name="Varga J."/>
            <person name="Awad M.M."/>
            <person name="Brinkac L.M."/>
            <person name="Daugherty S.C."/>
            <person name="Haft D.H."/>
            <person name="Dodson R.J."/>
            <person name="Madupu R."/>
            <person name="Nelson W.C."/>
            <person name="Rosovitz M.J."/>
            <person name="Sullivan S.A."/>
            <person name="Khouri H."/>
            <person name="Dimitrov G.I."/>
            <person name="Watkins K.L."/>
            <person name="Mulligan S."/>
            <person name="Benton J."/>
            <person name="Radune D."/>
            <person name="Fisher D.J."/>
            <person name="Atkins H.S."/>
            <person name="Hiscox T."/>
            <person name="Jost B.H."/>
            <person name="Billington S.J."/>
            <person name="Songer J.G."/>
            <person name="McClane B.A."/>
            <person name="Titball R.W."/>
            <person name="Rood J.I."/>
            <person name="Melville S.B."/>
            <person name="Paulsen I.T."/>
        </authorList>
    </citation>
    <scope>NUCLEOTIDE SEQUENCE [LARGE SCALE GENOMIC DNA]</scope>
    <source>
        <strain>ATCC 13124 / DSM 756 / JCM 1290 / NCIMB 6125 / NCTC 8237 / S 107 / Type A</strain>
    </source>
</reference>
<keyword id="KW-0963">Cytoplasm</keyword>
<keyword id="KW-0275">Fatty acid biosynthesis</keyword>
<keyword id="KW-0276">Fatty acid metabolism</keyword>
<keyword id="KW-0444">Lipid biosynthesis</keyword>
<keyword id="KW-0443">Lipid metabolism</keyword>
<keyword id="KW-0596">Phosphopantetheine</keyword>
<keyword id="KW-0597">Phosphoprotein</keyword>
<evidence type="ECO:0000255" key="1">
    <source>
        <dbReference type="HAMAP-Rule" id="MF_01217"/>
    </source>
</evidence>
<evidence type="ECO:0000255" key="2">
    <source>
        <dbReference type="PROSITE-ProRule" id="PRU00258"/>
    </source>
</evidence>
<sequence>MFDKLKEIIADKLSVNEDEITMESTFIDDLGADSLDIVELIMALEEELEMEIPDEDAEGFKTVGDVVEYITEHTEK</sequence>
<proteinExistence type="inferred from homology"/>
<comment type="function">
    <text evidence="1">Carrier of the growing fatty acid chain in fatty acid biosynthesis.</text>
</comment>
<comment type="pathway">
    <text evidence="1">Lipid metabolism; fatty acid biosynthesis.</text>
</comment>
<comment type="subcellular location">
    <subcellularLocation>
        <location evidence="1">Cytoplasm</location>
    </subcellularLocation>
</comment>
<comment type="PTM">
    <text evidence="1">4'-phosphopantetheine is transferred from CoA to a specific serine of apo-ACP by AcpS. This modification is essential for activity because fatty acids are bound in thioester linkage to the sulfhydryl of the prosthetic group.</text>
</comment>
<comment type="similarity">
    <text evidence="1">Belongs to the acyl carrier protein (ACP) family.</text>
</comment>
<gene>
    <name evidence="1" type="primary">acpP</name>
    <name type="ordered locus">CPF_1973</name>
</gene>
<dbReference type="EMBL" id="CP000246">
    <property type="protein sequence ID" value="ABG82761.1"/>
    <property type="molecule type" value="Genomic_DNA"/>
</dbReference>
<dbReference type="RefSeq" id="WP_003458423.1">
    <property type="nucleotide sequence ID" value="NC_008261.1"/>
</dbReference>
<dbReference type="SMR" id="Q0TPN4"/>
<dbReference type="STRING" id="195103.CPF_1973"/>
<dbReference type="PaxDb" id="195103-CPF_1973"/>
<dbReference type="GeneID" id="93001743"/>
<dbReference type="KEGG" id="cpf:CPF_1973"/>
<dbReference type="eggNOG" id="COG0236">
    <property type="taxonomic scope" value="Bacteria"/>
</dbReference>
<dbReference type="HOGENOM" id="CLU_108696_5_1_9"/>
<dbReference type="UniPathway" id="UPA00094"/>
<dbReference type="Proteomes" id="UP000001823">
    <property type="component" value="Chromosome"/>
</dbReference>
<dbReference type="GO" id="GO:0005829">
    <property type="term" value="C:cytosol"/>
    <property type="evidence" value="ECO:0007669"/>
    <property type="project" value="TreeGrafter"/>
</dbReference>
<dbReference type="GO" id="GO:0016020">
    <property type="term" value="C:membrane"/>
    <property type="evidence" value="ECO:0007669"/>
    <property type="project" value="GOC"/>
</dbReference>
<dbReference type="GO" id="GO:0000035">
    <property type="term" value="F:acyl binding"/>
    <property type="evidence" value="ECO:0007669"/>
    <property type="project" value="TreeGrafter"/>
</dbReference>
<dbReference type="GO" id="GO:0000036">
    <property type="term" value="F:acyl carrier activity"/>
    <property type="evidence" value="ECO:0007669"/>
    <property type="project" value="UniProtKB-UniRule"/>
</dbReference>
<dbReference type="GO" id="GO:0009245">
    <property type="term" value="P:lipid A biosynthetic process"/>
    <property type="evidence" value="ECO:0007669"/>
    <property type="project" value="TreeGrafter"/>
</dbReference>
<dbReference type="Gene3D" id="1.10.1200.10">
    <property type="entry name" value="ACP-like"/>
    <property type="match status" value="1"/>
</dbReference>
<dbReference type="HAMAP" id="MF_01217">
    <property type="entry name" value="Acyl_carrier"/>
    <property type="match status" value="1"/>
</dbReference>
<dbReference type="InterPro" id="IPR003231">
    <property type="entry name" value="ACP"/>
</dbReference>
<dbReference type="InterPro" id="IPR036736">
    <property type="entry name" value="ACP-like_sf"/>
</dbReference>
<dbReference type="InterPro" id="IPR009081">
    <property type="entry name" value="PP-bd_ACP"/>
</dbReference>
<dbReference type="InterPro" id="IPR006162">
    <property type="entry name" value="Ppantetheine_attach_site"/>
</dbReference>
<dbReference type="NCBIfam" id="TIGR00517">
    <property type="entry name" value="acyl_carrier"/>
    <property type="match status" value="1"/>
</dbReference>
<dbReference type="NCBIfam" id="NF002148">
    <property type="entry name" value="PRK00982.1-2"/>
    <property type="match status" value="1"/>
</dbReference>
<dbReference type="NCBIfam" id="NF002150">
    <property type="entry name" value="PRK00982.1-4"/>
    <property type="match status" value="1"/>
</dbReference>
<dbReference type="NCBIfam" id="NF002151">
    <property type="entry name" value="PRK00982.1-5"/>
    <property type="match status" value="1"/>
</dbReference>
<dbReference type="PANTHER" id="PTHR20863">
    <property type="entry name" value="ACYL CARRIER PROTEIN"/>
    <property type="match status" value="1"/>
</dbReference>
<dbReference type="PANTHER" id="PTHR20863:SF76">
    <property type="entry name" value="CARRIER DOMAIN-CONTAINING PROTEIN"/>
    <property type="match status" value="1"/>
</dbReference>
<dbReference type="Pfam" id="PF00550">
    <property type="entry name" value="PP-binding"/>
    <property type="match status" value="1"/>
</dbReference>
<dbReference type="SUPFAM" id="SSF47336">
    <property type="entry name" value="ACP-like"/>
    <property type="match status" value="1"/>
</dbReference>
<dbReference type="PROSITE" id="PS50075">
    <property type="entry name" value="CARRIER"/>
    <property type="match status" value="1"/>
</dbReference>
<dbReference type="PROSITE" id="PS00012">
    <property type="entry name" value="PHOSPHOPANTETHEINE"/>
    <property type="match status" value="1"/>
</dbReference>
<feature type="chain" id="PRO_1000066591" description="Acyl carrier protein">
    <location>
        <begin position="1"/>
        <end position="76"/>
    </location>
</feature>
<feature type="domain" description="Carrier" evidence="2">
    <location>
        <begin position="1"/>
        <end position="74"/>
    </location>
</feature>
<feature type="modified residue" description="O-(pantetheine 4'-phosphoryl)serine" evidence="2">
    <location>
        <position position="34"/>
    </location>
</feature>
<name>ACP_CLOP1</name>
<accession>Q0TPN4</accession>